<sequence length="146" mass="15880">MLLQGTHRIGRMAMLLALADENESPVLSIPKDWKYCTGKVGSMNSQKVVAAMETAAKSNQVIETDVYRETHALYHAIMEALYGVTRGQIQLADVLRTVGLRFAIVRGTPYDGKKEGEWVAVALYGTIGAPVKGSEHEAIGLGINHI</sequence>
<dbReference type="EMBL" id="CP000001">
    <property type="protein sequence ID" value="AAU16914.1"/>
    <property type="molecule type" value="Genomic_DNA"/>
</dbReference>
<dbReference type="RefSeq" id="WP_000926513.1">
    <property type="nucleotide sequence ID" value="NC_006274.1"/>
</dbReference>
<dbReference type="SMR" id="Q637H7"/>
<dbReference type="KEGG" id="bcz:BCE33L3355"/>
<dbReference type="PATRIC" id="fig|288681.22.peg.2068"/>
<dbReference type="Proteomes" id="UP000002612">
    <property type="component" value="Chromosome"/>
</dbReference>
<dbReference type="GO" id="GO:0003729">
    <property type="term" value="F:mRNA binding"/>
    <property type="evidence" value="ECO:0007669"/>
    <property type="project" value="UniProtKB-UniRule"/>
</dbReference>
<dbReference type="GO" id="GO:0006547">
    <property type="term" value="P:L-histidine metabolic process"/>
    <property type="evidence" value="ECO:0007669"/>
    <property type="project" value="UniProtKB-UniRule"/>
</dbReference>
<dbReference type="GO" id="GO:0010628">
    <property type="term" value="P:positive regulation of gene expression"/>
    <property type="evidence" value="ECO:0007669"/>
    <property type="project" value="UniProtKB-UniRule"/>
</dbReference>
<dbReference type="FunFam" id="3.40.1510.10:FF:000001">
    <property type="entry name" value="Hut operon positive regulatory protein"/>
    <property type="match status" value="1"/>
</dbReference>
<dbReference type="Gene3D" id="3.40.1510.10">
    <property type="entry name" value="Hut operon regulatory protein HutP"/>
    <property type="match status" value="1"/>
</dbReference>
<dbReference type="HAMAP" id="MF_00779">
    <property type="entry name" value="HutP"/>
    <property type="match status" value="1"/>
</dbReference>
<dbReference type="InterPro" id="IPR015111">
    <property type="entry name" value="Regulatory_HutP"/>
</dbReference>
<dbReference type="InterPro" id="IPR023552">
    <property type="entry name" value="Regulatory_HutP_bacillales"/>
</dbReference>
<dbReference type="InterPro" id="IPR036482">
    <property type="entry name" value="Regulatory_HutP_sf"/>
</dbReference>
<dbReference type="NCBIfam" id="NF002838">
    <property type="entry name" value="PRK03065.1"/>
    <property type="match status" value="1"/>
</dbReference>
<dbReference type="Pfam" id="PF09021">
    <property type="entry name" value="HutP"/>
    <property type="match status" value="1"/>
</dbReference>
<dbReference type="SUPFAM" id="SSF111064">
    <property type="entry name" value="Hut operon positive regulatory protein HutP"/>
    <property type="match status" value="1"/>
</dbReference>
<protein>
    <recommendedName>
        <fullName evidence="1">Hut operon positive regulatory protein</fullName>
    </recommendedName>
</protein>
<gene>
    <name evidence="1" type="primary">hutP</name>
    <name type="ordered locus">BCE33L3355</name>
</gene>
<proteinExistence type="inferred from homology"/>
<name>HUTP_BACCZ</name>
<keyword id="KW-0010">Activator</keyword>
<keyword id="KW-0369">Histidine metabolism</keyword>
<keyword id="KW-0694">RNA-binding</keyword>
<keyword id="KW-0804">Transcription</keyword>
<keyword id="KW-0805">Transcription regulation</keyword>
<reference key="1">
    <citation type="journal article" date="2006" name="J. Bacteriol.">
        <title>Pathogenomic sequence analysis of Bacillus cereus and Bacillus thuringiensis isolates closely related to Bacillus anthracis.</title>
        <authorList>
            <person name="Han C.S."/>
            <person name="Xie G."/>
            <person name="Challacombe J.F."/>
            <person name="Altherr M.R."/>
            <person name="Bhotika S.S."/>
            <person name="Bruce D."/>
            <person name="Campbell C.S."/>
            <person name="Campbell M.L."/>
            <person name="Chen J."/>
            <person name="Chertkov O."/>
            <person name="Cleland C."/>
            <person name="Dimitrijevic M."/>
            <person name="Doggett N.A."/>
            <person name="Fawcett J.J."/>
            <person name="Glavina T."/>
            <person name="Goodwin L.A."/>
            <person name="Hill K.K."/>
            <person name="Hitchcock P."/>
            <person name="Jackson P.J."/>
            <person name="Keim P."/>
            <person name="Kewalramani A.R."/>
            <person name="Longmire J."/>
            <person name="Lucas S."/>
            <person name="Malfatti S."/>
            <person name="McMurry K."/>
            <person name="Meincke L.J."/>
            <person name="Misra M."/>
            <person name="Moseman B.L."/>
            <person name="Mundt M."/>
            <person name="Munk A.C."/>
            <person name="Okinaka R.T."/>
            <person name="Parson-Quintana B."/>
            <person name="Reilly L.P."/>
            <person name="Richardson P."/>
            <person name="Robinson D.L."/>
            <person name="Rubin E."/>
            <person name="Saunders E."/>
            <person name="Tapia R."/>
            <person name="Tesmer J.G."/>
            <person name="Thayer N."/>
            <person name="Thompson L.S."/>
            <person name="Tice H."/>
            <person name="Ticknor L.O."/>
            <person name="Wills P.L."/>
            <person name="Brettin T.S."/>
            <person name="Gilna P."/>
        </authorList>
    </citation>
    <scope>NUCLEOTIDE SEQUENCE [LARGE SCALE GENOMIC DNA]</scope>
    <source>
        <strain>ZK / E33L</strain>
    </source>
</reference>
<feature type="chain" id="PRO_1000148464" description="Hut operon positive regulatory protein">
    <location>
        <begin position="1"/>
        <end position="146"/>
    </location>
</feature>
<evidence type="ECO:0000255" key="1">
    <source>
        <dbReference type="HAMAP-Rule" id="MF_00779"/>
    </source>
</evidence>
<comment type="function">
    <text evidence="1">Antiterminator that binds to cis-acting regulatory sequences on the mRNA in the presence of histidine, thereby suppressing transcription termination and activating the hut operon for histidine utilization.</text>
</comment>
<comment type="subunit">
    <text evidence="1">Homohexamer.</text>
</comment>
<comment type="similarity">
    <text evidence="1">Belongs to the HutP family.</text>
</comment>
<organism>
    <name type="scientific">Bacillus cereus (strain ZK / E33L)</name>
    <dbReference type="NCBI Taxonomy" id="288681"/>
    <lineage>
        <taxon>Bacteria</taxon>
        <taxon>Bacillati</taxon>
        <taxon>Bacillota</taxon>
        <taxon>Bacilli</taxon>
        <taxon>Bacillales</taxon>
        <taxon>Bacillaceae</taxon>
        <taxon>Bacillus</taxon>
        <taxon>Bacillus cereus group</taxon>
    </lineage>
</organism>
<accession>Q637H7</accession>